<dbReference type="EMBL" id="CP000909">
    <property type="protein sequence ID" value="ABY36645.1"/>
    <property type="molecule type" value="Genomic_DNA"/>
</dbReference>
<dbReference type="RefSeq" id="WP_012259298.1">
    <property type="nucleotide sequence ID" value="NC_010175.1"/>
</dbReference>
<dbReference type="RefSeq" id="YP_001637034.1">
    <property type="nucleotide sequence ID" value="NC_010175.1"/>
</dbReference>
<dbReference type="SMR" id="A9WKL7"/>
<dbReference type="FunCoup" id="A9WKL7">
    <property type="interactions" value="503"/>
</dbReference>
<dbReference type="STRING" id="324602.Caur_3460"/>
<dbReference type="EnsemblBacteria" id="ABY36645">
    <property type="protein sequence ID" value="ABY36645"/>
    <property type="gene ID" value="Caur_3460"/>
</dbReference>
<dbReference type="KEGG" id="cau:Caur_3460"/>
<dbReference type="PATRIC" id="fig|324602.8.peg.3899"/>
<dbReference type="eggNOG" id="COG0445">
    <property type="taxonomic scope" value="Bacteria"/>
</dbReference>
<dbReference type="HOGENOM" id="CLU_007831_2_2_0"/>
<dbReference type="InParanoid" id="A9WKL7"/>
<dbReference type="Proteomes" id="UP000002008">
    <property type="component" value="Chromosome"/>
</dbReference>
<dbReference type="GO" id="GO:0005829">
    <property type="term" value="C:cytosol"/>
    <property type="evidence" value="ECO:0000318"/>
    <property type="project" value="GO_Central"/>
</dbReference>
<dbReference type="GO" id="GO:0050660">
    <property type="term" value="F:flavin adenine dinucleotide binding"/>
    <property type="evidence" value="ECO:0000318"/>
    <property type="project" value="GO_Central"/>
</dbReference>
<dbReference type="GO" id="GO:0030488">
    <property type="term" value="P:tRNA methylation"/>
    <property type="evidence" value="ECO:0000318"/>
    <property type="project" value="GO_Central"/>
</dbReference>
<dbReference type="GO" id="GO:0002098">
    <property type="term" value="P:tRNA wobble uridine modification"/>
    <property type="evidence" value="ECO:0000318"/>
    <property type="project" value="GO_Central"/>
</dbReference>
<dbReference type="FunFam" id="1.10.10.1800:FF:000001">
    <property type="entry name" value="tRNA uridine 5-carboxymethylaminomethyl modification enzyme MnmG"/>
    <property type="match status" value="1"/>
</dbReference>
<dbReference type="FunFam" id="1.10.150.570:FF:000001">
    <property type="entry name" value="tRNA uridine 5-carboxymethylaminomethyl modification enzyme MnmG"/>
    <property type="match status" value="1"/>
</dbReference>
<dbReference type="FunFam" id="3.50.50.60:FF:000002">
    <property type="entry name" value="tRNA uridine 5-carboxymethylaminomethyl modification enzyme MnmG"/>
    <property type="match status" value="1"/>
</dbReference>
<dbReference type="Gene3D" id="3.50.50.60">
    <property type="entry name" value="FAD/NAD(P)-binding domain"/>
    <property type="match status" value="2"/>
</dbReference>
<dbReference type="Gene3D" id="1.10.150.570">
    <property type="entry name" value="GidA associated domain, C-terminal subdomain"/>
    <property type="match status" value="1"/>
</dbReference>
<dbReference type="Gene3D" id="1.10.10.1800">
    <property type="entry name" value="tRNA uridine 5-carboxymethylaminomethyl modification enzyme MnmG/GidA"/>
    <property type="match status" value="1"/>
</dbReference>
<dbReference type="HAMAP" id="MF_00129">
    <property type="entry name" value="MnmG_GidA"/>
    <property type="match status" value="1"/>
</dbReference>
<dbReference type="InterPro" id="IPR036188">
    <property type="entry name" value="FAD/NAD-bd_sf"/>
</dbReference>
<dbReference type="InterPro" id="IPR049312">
    <property type="entry name" value="GIDA_C_N"/>
</dbReference>
<dbReference type="InterPro" id="IPR004416">
    <property type="entry name" value="MnmG"/>
</dbReference>
<dbReference type="InterPro" id="IPR002218">
    <property type="entry name" value="MnmG-rel"/>
</dbReference>
<dbReference type="InterPro" id="IPR020595">
    <property type="entry name" value="MnmG-rel_CS"/>
</dbReference>
<dbReference type="InterPro" id="IPR026904">
    <property type="entry name" value="MnmG_C"/>
</dbReference>
<dbReference type="InterPro" id="IPR047001">
    <property type="entry name" value="MnmG_C_subdom"/>
</dbReference>
<dbReference type="InterPro" id="IPR044920">
    <property type="entry name" value="MnmG_C_subdom_sf"/>
</dbReference>
<dbReference type="InterPro" id="IPR040131">
    <property type="entry name" value="MnmG_N"/>
</dbReference>
<dbReference type="PANTHER" id="PTHR11806">
    <property type="entry name" value="GLUCOSE INHIBITED DIVISION PROTEIN A"/>
    <property type="match status" value="1"/>
</dbReference>
<dbReference type="PANTHER" id="PTHR11806:SF0">
    <property type="entry name" value="PROTEIN MTO1 HOMOLOG, MITOCHONDRIAL"/>
    <property type="match status" value="1"/>
</dbReference>
<dbReference type="Pfam" id="PF01134">
    <property type="entry name" value="GIDA"/>
    <property type="match status" value="1"/>
</dbReference>
<dbReference type="Pfam" id="PF21680">
    <property type="entry name" value="GIDA_C_1st"/>
    <property type="match status" value="1"/>
</dbReference>
<dbReference type="Pfam" id="PF13932">
    <property type="entry name" value="SAM_GIDA_C"/>
    <property type="match status" value="1"/>
</dbReference>
<dbReference type="PRINTS" id="PR00411">
    <property type="entry name" value="PNDRDTASEI"/>
</dbReference>
<dbReference type="SMART" id="SM01228">
    <property type="entry name" value="GIDA_assoc_3"/>
    <property type="match status" value="1"/>
</dbReference>
<dbReference type="SUPFAM" id="SSF51905">
    <property type="entry name" value="FAD/NAD(P)-binding domain"/>
    <property type="match status" value="1"/>
</dbReference>
<dbReference type="PROSITE" id="PS01280">
    <property type="entry name" value="GIDA_1"/>
    <property type="match status" value="1"/>
</dbReference>
<dbReference type="PROSITE" id="PS01281">
    <property type="entry name" value="GIDA_2"/>
    <property type="match status" value="1"/>
</dbReference>
<accession>A9WKL7</accession>
<comment type="function">
    <text evidence="1">NAD-binding protein involved in the addition of a carboxymethylaminomethyl (cmnm) group at the wobble position (U34) of certain tRNAs, forming tRNA-cmnm(5)s(2)U34.</text>
</comment>
<comment type="cofactor">
    <cofactor evidence="1">
        <name>FAD</name>
        <dbReference type="ChEBI" id="CHEBI:57692"/>
    </cofactor>
</comment>
<comment type="subunit">
    <text evidence="1">Homodimer. Heterotetramer of two MnmE and two MnmG subunits.</text>
</comment>
<comment type="subcellular location">
    <subcellularLocation>
        <location evidence="1">Cytoplasm</location>
    </subcellularLocation>
</comment>
<comment type="similarity">
    <text evidence="1">Belongs to the MnmG family.</text>
</comment>
<name>MNMG_CHLAA</name>
<protein>
    <recommendedName>
        <fullName evidence="1">tRNA uridine 5-carboxymethylaminomethyl modification enzyme MnmG</fullName>
    </recommendedName>
    <alternativeName>
        <fullName evidence="1">Glucose-inhibited division protein A</fullName>
    </alternativeName>
</protein>
<proteinExistence type="inferred from homology"/>
<keyword id="KW-0963">Cytoplasm</keyword>
<keyword id="KW-0274">FAD</keyword>
<keyword id="KW-0285">Flavoprotein</keyword>
<keyword id="KW-0520">NAD</keyword>
<keyword id="KW-1185">Reference proteome</keyword>
<keyword id="KW-0819">tRNA processing</keyword>
<evidence type="ECO:0000255" key="1">
    <source>
        <dbReference type="HAMAP-Rule" id="MF_00129"/>
    </source>
</evidence>
<organism>
    <name type="scientific">Chloroflexus aurantiacus (strain ATCC 29366 / DSM 635 / J-10-fl)</name>
    <dbReference type="NCBI Taxonomy" id="324602"/>
    <lineage>
        <taxon>Bacteria</taxon>
        <taxon>Bacillati</taxon>
        <taxon>Chloroflexota</taxon>
        <taxon>Chloroflexia</taxon>
        <taxon>Chloroflexales</taxon>
        <taxon>Chloroflexineae</taxon>
        <taxon>Chloroflexaceae</taxon>
        <taxon>Chloroflexus</taxon>
    </lineage>
</organism>
<gene>
    <name evidence="1" type="primary">mnmG</name>
    <name evidence="1" type="synonym">gidA</name>
    <name type="ordered locus">Caur_3460</name>
</gene>
<feature type="chain" id="PRO_0000345254" description="tRNA uridine 5-carboxymethylaminomethyl modification enzyme MnmG">
    <location>
        <begin position="1"/>
        <end position="651"/>
    </location>
</feature>
<feature type="binding site" evidence="1">
    <location>
        <begin position="11"/>
        <end position="16"/>
    </location>
    <ligand>
        <name>FAD</name>
        <dbReference type="ChEBI" id="CHEBI:57692"/>
    </ligand>
</feature>
<feature type="binding site" evidence="1">
    <location>
        <begin position="296"/>
        <end position="310"/>
    </location>
    <ligand>
        <name>NAD(+)</name>
        <dbReference type="ChEBI" id="CHEBI:57540"/>
    </ligand>
</feature>
<sequence>MQTRYDVIVVGAGHAGCEAAHAAARLGCRTLLLTIDLDKLAHMSCNPSIGGPAKGHLVREIDALGGLMGRITDRSAIQIRLLNESKGPAVQSLRAQCDKRLYARLMKETLERVPNLDLRQAMVERIAPPNADTQCFTVTTHTGWRYLAPAVILTTGTFLRGRAITGEAMWGAGRAGEAPAMALSEDLAALGFPLVRLKTGTPPRLAAATIDFSLTELQPGSDTPLSFGHYYPELGETIPPPEYHGPPAPVYPHPQLDGWRPQLPCYQVHTTPEFHAIIRENLHRAPLFSGIIEGVGPRYCPSIEDKIVRFADKERHGLFLEPEGWTTSEVYVQGCNTSLPEDVQWAMLRSIPALRNVELMRIGYAIEYDAVATGEITADMQTRRLRGLFFAGQINGTTGYEEAAAQGLMAGINAAHYVQGKPPVILGRAEAYIGVLIDDLTTKEIREPYRMFTSRAEYRLLLRGDNADLRLTPLAYRLGLVDGERAAVVEARRQQTEHALQQMRERRIFPSAAVNASLEAHGIKPISQPVTVAEVLARPEVRYTQLRDALPDLPALSDAVIEQVEIGCKYSGYIARQEREVARMQKMEHRRIPPDFDYTSLPGLRNEARQVLMRFRPATLGQAGRLAGINPADVAIILFALERRQGDQVAR</sequence>
<reference key="1">
    <citation type="journal article" date="2011" name="BMC Genomics">
        <title>Complete genome sequence of the filamentous anoxygenic phototrophic bacterium Chloroflexus aurantiacus.</title>
        <authorList>
            <person name="Tang K.H."/>
            <person name="Barry K."/>
            <person name="Chertkov O."/>
            <person name="Dalin E."/>
            <person name="Han C.S."/>
            <person name="Hauser L.J."/>
            <person name="Honchak B.M."/>
            <person name="Karbach L.E."/>
            <person name="Land M.L."/>
            <person name="Lapidus A."/>
            <person name="Larimer F.W."/>
            <person name="Mikhailova N."/>
            <person name="Pitluck S."/>
            <person name="Pierson B.K."/>
            <person name="Blankenship R.E."/>
        </authorList>
    </citation>
    <scope>NUCLEOTIDE SEQUENCE [LARGE SCALE GENOMIC DNA]</scope>
    <source>
        <strain>ATCC 29366 / DSM 635 / J-10-fl</strain>
    </source>
</reference>